<organism>
    <name type="scientific">Mus musculus</name>
    <name type="common">Mouse</name>
    <dbReference type="NCBI Taxonomy" id="10090"/>
    <lineage>
        <taxon>Eukaryota</taxon>
        <taxon>Metazoa</taxon>
        <taxon>Chordata</taxon>
        <taxon>Craniata</taxon>
        <taxon>Vertebrata</taxon>
        <taxon>Euteleostomi</taxon>
        <taxon>Mammalia</taxon>
        <taxon>Eutheria</taxon>
        <taxon>Euarchontoglires</taxon>
        <taxon>Glires</taxon>
        <taxon>Rodentia</taxon>
        <taxon>Myomorpha</taxon>
        <taxon>Muroidea</taxon>
        <taxon>Muridae</taxon>
        <taxon>Murinae</taxon>
        <taxon>Mus</taxon>
        <taxon>Mus</taxon>
    </lineage>
</organism>
<feature type="chain" id="PRO_0000386643" description="E3 ubiquitin-protein ligase TRIM41">
    <location>
        <begin position="1"/>
        <end position="630"/>
    </location>
</feature>
<feature type="domain" description="B30.2/SPRY" evidence="5">
    <location>
        <begin position="413"/>
        <end position="630"/>
    </location>
</feature>
<feature type="zinc finger region" description="RING-type; degenerate" evidence="4">
    <location>
        <begin position="20"/>
        <end position="61"/>
    </location>
</feature>
<feature type="zinc finger region" description="B box-type" evidence="3">
    <location>
        <begin position="222"/>
        <end position="263"/>
    </location>
</feature>
<feature type="region of interest" description="Disordered" evidence="6">
    <location>
        <begin position="51"/>
        <end position="97"/>
    </location>
</feature>
<feature type="region of interest" description="Disordered" evidence="6">
    <location>
        <begin position="148"/>
        <end position="176"/>
    </location>
</feature>
<feature type="region of interest" description="Disordered" evidence="6">
    <location>
        <begin position="503"/>
        <end position="535"/>
    </location>
</feature>
<feature type="coiled-coil region" evidence="2">
    <location>
        <begin position="281"/>
        <end position="374"/>
    </location>
</feature>
<feature type="compositionally biased region" description="Acidic residues" evidence="6">
    <location>
        <begin position="51"/>
        <end position="75"/>
    </location>
</feature>
<feature type="compositionally biased region" description="Acidic residues" evidence="6">
    <location>
        <begin position="148"/>
        <end position="166"/>
    </location>
</feature>
<feature type="binding site" evidence="3">
    <location>
        <position position="227"/>
    </location>
    <ligand>
        <name>Zn(2+)</name>
        <dbReference type="ChEBI" id="CHEBI:29105"/>
    </ligand>
</feature>
<feature type="binding site" evidence="3">
    <location>
        <position position="230"/>
    </location>
    <ligand>
        <name>Zn(2+)</name>
        <dbReference type="ChEBI" id="CHEBI:29105"/>
    </ligand>
</feature>
<feature type="binding site" evidence="3">
    <location>
        <position position="249"/>
    </location>
    <ligand>
        <name>Zn(2+)</name>
        <dbReference type="ChEBI" id="CHEBI:29105"/>
    </ligand>
</feature>
<feature type="binding site" evidence="3">
    <location>
        <position position="255"/>
    </location>
    <ligand>
        <name>Zn(2+)</name>
        <dbReference type="ChEBI" id="CHEBI:29105"/>
    </ligand>
</feature>
<feature type="modified residue" description="Phosphothreonine" evidence="1">
    <location>
        <position position="85"/>
    </location>
</feature>
<feature type="modified residue" description="Phosphoserine" evidence="1">
    <location>
        <position position="447"/>
    </location>
</feature>
<feature type="cross-link" description="Glycyl lysine isopeptide (Lys-Gly) (interchain with G-Cter in SUMO2)" evidence="1">
    <location>
        <position position="256"/>
    </location>
</feature>
<evidence type="ECO:0000250" key="1">
    <source>
        <dbReference type="UniProtKB" id="Q8WV44"/>
    </source>
</evidence>
<evidence type="ECO:0000255" key="2"/>
<evidence type="ECO:0000255" key="3">
    <source>
        <dbReference type="PROSITE-ProRule" id="PRU00024"/>
    </source>
</evidence>
<evidence type="ECO:0000255" key="4">
    <source>
        <dbReference type="PROSITE-ProRule" id="PRU00175"/>
    </source>
</evidence>
<evidence type="ECO:0000255" key="5">
    <source>
        <dbReference type="PROSITE-ProRule" id="PRU00548"/>
    </source>
</evidence>
<evidence type="ECO:0000256" key="6">
    <source>
        <dbReference type="SAM" id="MobiDB-lite"/>
    </source>
</evidence>
<evidence type="ECO:0000269" key="7">
    <source>
    </source>
</evidence>
<evidence type="ECO:0000269" key="8">
    <source>
    </source>
</evidence>
<evidence type="ECO:0000303" key="9">
    <source>
    </source>
</evidence>
<evidence type="ECO:0000305" key="10"/>
<evidence type="ECO:0000312" key="11">
    <source>
        <dbReference type="MGI" id="MGI:2384814"/>
    </source>
</evidence>
<name>TRI41_MOUSE</name>
<keyword id="KW-0175">Coiled coil</keyword>
<keyword id="KW-0963">Cytoplasm</keyword>
<keyword id="KW-1017">Isopeptide bond</keyword>
<keyword id="KW-0479">Metal-binding</keyword>
<keyword id="KW-0539">Nucleus</keyword>
<keyword id="KW-0597">Phosphoprotein</keyword>
<keyword id="KW-1185">Reference proteome</keyword>
<keyword id="KW-0808">Transferase</keyword>
<keyword id="KW-0832">Ubl conjugation</keyword>
<keyword id="KW-0833">Ubl conjugation pathway</keyword>
<keyword id="KW-0862">Zinc</keyword>
<keyword id="KW-0863">Zinc-finger</keyword>
<dbReference type="EC" id="2.3.2.27" evidence="7"/>
<dbReference type="EMBL" id="AL645849">
    <property type="status" value="NOT_ANNOTATED_CDS"/>
    <property type="molecule type" value="Genomic_DNA"/>
</dbReference>
<dbReference type="EMBL" id="CH466575">
    <property type="protein sequence ID" value="EDL33789.1"/>
    <property type="molecule type" value="Genomic_DNA"/>
</dbReference>
<dbReference type="CCDS" id="CCDS36138.1"/>
<dbReference type="RefSeq" id="NP_663352.2">
    <property type="nucleotide sequence ID" value="NM_145377.2"/>
</dbReference>
<dbReference type="SMR" id="Q5NCC3"/>
<dbReference type="FunCoup" id="Q5NCC3">
    <property type="interactions" value="2763"/>
</dbReference>
<dbReference type="IntAct" id="Q5NCC3">
    <property type="interactions" value="1"/>
</dbReference>
<dbReference type="STRING" id="10090.ENSMUSP00000037055"/>
<dbReference type="GlyGen" id="Q5NCC3">
    <property type="glycosylation" value="1 site"/>
</dbReference>
<dbReference type="iPTMnet" id="Q5NCC3"/>
<dbReference type="PhosphoSitePlus" id="Q5NCC3"/>
<dbReference type="PaxDb" id="10090-ENSMUSP00000037055"/>
<dbReference type="PeptideAtlas" id="Q5NCC3"/>
<dbReference type="ProteomicsDB" id="258976"/>
<dbReference type="Pumba" id="Q5NCC3"/>
<dbReference type="Antibodypedia" id="17930">
    <property type="antibodies" value="211 antibodies from 26 providers"/>
</dbReference>
<dbReference type="Ensembl" id="ENSMUST00000047145.14">
    <property type="protein sequence ID" value="ENSMUSP00000037055.8"/>
    <property type="gene ID" value="ENSMUSG00000040365.15"/>
</dbReference>
<dbReference type="GeneID" id="211007"/>
<dbReference type="KEGG" id="mmu:211007"/>
<dbReference type="UCSC" id="uc007ipc.1">
    <property type="organism name" value="mouse"/>
</dbReference>
<dbReference type="AGR" id="MGI:2384814"/>
<dbReference type="CTD" id="90933"/>
<dbReference type="MGI" id="MGI:2384814">
    <property type="gene designation" value="Trim41"/>
</dbReference>
<dbReference type="VEuPathDB" id="HostDB:ENSMUSG00000040365"/>
<dbReference type="eggNOG" id="KOG2177">
    <property type="taxonomic scope" value="Eukaryota"/>
</dbReference>
<dbReference type="GeneTree" id="ENSGT00940000154294"/>
<dbReference type="HOGENOM" id="CLU_013137_0_3_1"/>
<dbReference type="InParanoid" id="Q5NCC3"/>
<dbReference type="OMA" id="WDTPMRE"/>
<dbReference type="OrthoDB" id="1630758at2759"/>
<dbReference type="PhylomeDB" id="Q5NCC3"/>
<dbReference type="TreeFam" id="TF342569"/>
<dbReference type="Reactome" id="R-MMU-983168">
    <property type="pathway name" value="Antigen processing: Ubiquitination &amp; Proteasome degradation"/>
</dbReference>
<dbReference type="UniPathway" id="UPA00143"/>
<dbReference type="BioGRID-ORCS" id="211007">
    <property type="hits" value="5 hits in 80 CRISPR screens"/>
</dbReference>
<dbReference type="ChiTaRS" id="Trim41">
    <property type="organism name" value="mouse"/>
</dbReference>
<dbReference type="PRO" id="PR:Q5NCC3"/>
<dbReference type="Proteomes" id="UP000000589">
    <property type="component" value="Chromosome 11"/>
</dbReference>
<dbReference type="RNAct" id="Q5NCC3">
    <property type="molecule type" value="protein"/>
</dbReference>
<dbReference type="Bgee" id="ENSMUSG00000040365">
    <property type="expression patterns" value="Expressed in retinal neural layer and 258 other cell types or tissues"/>
</dbReference>
<dbReference type="ExpressionAtlas" id="Q5NCC3">
    <property type="expression patterns" value="baseline and differential"/>
</dbReference>
<dbReference type="GO" id="GO:0005829">
    <property type="term" value="C:cytosol"/>
    <property type="evidence" value="ECO:0007669"/>
    <property type="project" value="Ensembl"/>
</dbReference>
<dbReference type="GO" id="GO:0001650">
    <property type="term" value="C:fibrillar center"/>
    <property type="evidence" value="ECO:0007669"/>
    <property type="project" value="Ensembl"/>
</dbReference>
<dbReference type="GO" id="GO:0005654">
    <property type="term" value="C:nucleoplasm"/>
    <property type="evidence" value="ECO:0007669"/>
    <property type="project" value="Ensembl"/>
</dbReference>
<dbReference type="GO" id="GO:0042802">
    <property type="term" value="F:identical protein binding"/>
    <property type="evidence" value="ECO:0007669"/>
    <property type="project" value="Ensembl"/>
</dbReference>
<dbReference type="GO" id="GO:0061630">
    <property type="term" value="F:ubiquitin protein ligase activity"/>
    <property type="evidence" value="ECO:0007669"/>
    <property type="project" value="Ensembl"/>
</dbReference>
<dbReference type="GO" id="GO:0008270">
    <property type="term" value="F:zinc ion binding"/>
    <property type="evidence" value="ECO:0007669"/>
    <property type="project" value="UniProtKB-KW"/>
</dbReference>
<dbReference type="GO" id="GO:0071222">
    <property type="term" value="P:cellular response to lipopolysaccharide"/>
    <property type="evidence" value="ECO:0000250"/>
    <property type="project" value="UniProtKB"/>
</dbReference>
<dbReference type="GO" id="GO:0071225">
    <property type="term" value="P:cellular response to muramyl dipeptide"/>
    <property type="evidence" value="ECO:0000250"/>
    <property type="project" value="UniProtKB"/>
</dbReference>
<dbReference type="GO" id="GO:0051607">
    <property type="term" value="P:defense response to virus"/>
    <property type="evidence" value="ECO:0000250"/>
    <property type="project" value="UniProtKB"/>
</dbReference>
<dbReference type="GO" id="GO:0060340">
    <property type="term" value="P:positive regulation of type I interferon-mediated signaling pathway"/>
    <property type="evidence" value="ECO:0000250"/>
    <property type="project" value="UniProtKB"/>
</dbReference>
<dbReference type="GO" id="GO:0006513">
    <property type="term" value="P:protein monoubiquitination"/>
    <property type="evidence" value="ECO:0000250"/>
    <property type="project" value="UniProtKB"/>
</dbReference>
<dbReference type="CDD" id="cd19762">
    <property type="entry name" value="Bbox2_TRIM7-like"/>
    <property type="match status" value="1"/>
</dbReference>
<dbReference type="CDD" id="cd13741">
    <property type="entry name" value="SPRY_PRY_TRIM41"/>
    <property type="match status" value="1"/>
</dbReference>
<dbReference type="FunFam" id="2.60.120.920:FF:000025">
    <property type="entry name" value="E3 ubiquitin-protein ligase TRIM41 isoform X1"/>
    <property type="match status" value="1"/>
</dbReference>
<dbReference type="FunFam" id="3.30.40.10:FF:000216">
    <property type="entry name" value="E3 ubiquitin-protein ligase TRIM41 isoform X1"/>
    <property type="match status" value="1"/>
</dbReference>
<dbReference type="FunFam" id="3.30.160.60:FF:000486">
    <property type="entry name" value="E3 ubiquitin-protein ligase TRIM41 isoform X2"/>
    <property type="match status" value="1"/>
</dbReference>
<dbReference type="Gene3D" id="2.60.120.920">
    <property type="match status" value="1"/>
</dbReference>
<dbReference type="Gene3D" id="3.30.160.60">
    <property type="entry name" value="Classic Zinc Finger"/>
    <property type="match status" value="1"/>
</dbReference>
<dbReference type="Gene3D" id="3.30.40.10">
    <property type="entry name" value="Zinc/RING finger domain, C3HC4 (zinc finger)"/>
    <property type="match status" value="1"/>
</dbReference>
<dbReference type="InterPro" id="IPR001870">
    <property type="entry name" value="B30.2/SPRY"/>
</dbReference>
<dbReference type="InterPro" id="IPR043136">
    <property type="entry name" value="B30.2/SPRY_sf"/>
</dbReference>
<dbReference type="InterPro" id="IPR003879">
    <property type="entry name" value="Butyrophylin_SPRY"/>
</dbReference>
<dbReference type="InterPro" id="IPR013320">
    <property type="entry name" value="ConA-like_dom_sf"/>
</dbReference>
<dbReference type="InterPro" id="IPR006574">
    <property type="entry name" value="PRY"/>
</dbReference>
<dbReference type="InterPro" id="IPR003877">
    <property type="entry name" value="SPRY_dom"/>
</dbReference>
<dbReference type="InterPro" id="IPR050143">
    <property type="entry name" value="TRIM/RBCC"/>
</dbReference>
<dbReference type="InterPro" id="IPR042828">
    <property type="entry name" value="TRIM41_SPRY_PRY"/>
</dbReference>
<dbReference type="InterPro" id="IPR000315">
    <property type="entry name" value="Znf_B-box"/>
</dbReference>
<dbReference type="InterPro" id="IPR001841">
    <property type="entry name" value="Znf_RING"/>
</dbReference>
<dbReference type="InterPro" id="IPR013083">
    <property type="entry name" value="Znf_RING/FYVE/PHD"/>
</dbReference>
<dbReference type="InterPro" id="IPR017907">
    <property type="entry name" value="Znf_RING_CS"/>
</dbReference>
<dbReference type="PANTHER" id="PTHR24103">
    <property type="entry name" value="E3 UBIQUITIN-PROTEIN LIGASE TRIM"/>
    <property type="match status" value="1"/>
</dbReference>
<dbReference type="Pfam" id="PF13765">
    <property type="entry name" value="PRY"/>
    <property type="match status" value="1"/>
</dbReference>
<dbReference type="Pfam" id="PF00622">
    <property type="entry name" value="SPRY"/>
    <property type="match status" value="1"/>
</dbReference>
<dbReference type="Pfam" id="PF00643">
    <property type="entry name" value="zf-B_box"/>
    <property type="match status" value="1"/>
</dbReference>
<dbReference type="Pfam" id="PF15227">
    <property type="entry name" value="zf-C3HC4_4"/>
    <property type="match status" value="1"/>
</dbReference>
<dbReference type="PRINTS" id="PR01407">
    <property type="entry name" value="BUTYPHLNCDUF"/>
</dbReference>
<dbReference type="SMART" id="SM00336">
    <property type="entry name" value="BBOX"/>
    <property type="match status" value="1"/>
</dbReference>
<dbReference type="SMART" id="SM00589">
    <property type="entry name" value="PRY"/>
    <property type="match status" value="1"/>
</dbReference>
<dbReference type="SMART" id="SM00184">
    <property type="entry name" value="RING"/>
    <property type="match status" value="1"/>
</dbReference>
<dbReference type="SMART" id="SM00449">
    <property type="entry name" value="SPRY"/>
    <property type="match status" value="1"/>
</dbReference>
<dbReference type="SUPFAM" id="SSF57845">
    <property type="entry name" value="B-box zinc-binding domain"/>
    <property type="match status" value="1"/>
</dbReference>
<dbReference type="SUPFAM" id="SSF49899">
    <property type="entry name" value="Concanavalin A-like lectins/glucanases"/>
    <property type="match status" value="1"/>
</dbReference>
<dbReference type="SUPFAM" id="SSF57850">
    <property type="entry name" value="RING/U-box"/>
    <property type="match status" value="2"/>
</dbReference>
<dbReference type="PROSITE" id="PS50188">
    <property type="entry name" value="B302_SPRY"/>
    <property type="match status" value="1"/>
</dbReference>
<dbReference type="PROSITE" id="PS50119">
    <property type="entry name" value="ZF_BBOX"/>
    <property type="match status" value="1"/>
</dbReference>
<dbReference type="PROSITE" id="PS00518">
    <property type="entry name" value="ZF_RING_1"/>
    <property type="match status" value="1"/>
</dbReference>
<dbReference type="PROSITE" id="PS50089">
    <property type="entry name" value="ZF_RING_2"/>
    <property type="match status" value="1"/>
</dbReference>
<reference key="1">
    <citation type="journal article" date="2009" name="PLoS Biol.">
        <title>Lineage-specific biology revealed by a finished genome assembly of the mouse.</title>
        <authorList>
            <person name="Church D.M."/>
            <person name="Goodstadt L."/>
            <person name="Hillier L.W."/>
            <person name="Zody M.C."/>
            <person name="Goldstein S."/>
            <person name="She X."/>
            <person name="Bult C.J."/>
            <person name="Agarwala R."/>
            <person name="Cherry J.L."/>
            <person name="DiCuccio M."/>
            <person name="Hlavina W."/>
            <person name="Kapustin Y."/>
            <person name="Meric P."/>
            <person name="Maglott D."/>
            <person name="Birtle Z."/>
            <person name="Marques A.C."/>
            <person name="Graves T."/>
            <person name="Zhou S."/>
            <person name="Teague B."/>
            <person name="Potamousis K."/>
            <person name="Churas C."/>
            <person name="Place M."/>
            <person name="Herschleb J."/>
            <person name="Runnheim R."/>
            <person name="Forrest D."/>
            <person name="Amos-Landgraf J."/>
            <person name="Schwartz D.C."/>
            <person name="Cheng Z."/>
            <person name="Lindblad-Toh K."/>
            <person name="Eichler E.E."/>
            <person name="Ponting C.P."/>
        </authorList>
    </citation>
    <scope>NUCLEOTIDE SEQUENCE [LARGE SCALE GENOMIC DNA]</scope>
    <source>
        <strain>C57BL/6J</strain>
    </source>
</reference>
<reference key="2">
    <citation type="submission" date="2005-09" db="EMBL/GenBank/DDBJ databases">
        <authorList>
            <person name="Mural R.J."/>
            <person name="Adams M.D."/>
            <person name="Myers E.W."/>
            <person name="Smith H.O."/>
            <person name="Venter J.C."/>
        </authorList>
    </citation>
    <scope>NUCLEOTIDE SEQUENCE [LARGE SCALE GENOMIC DNA]</scope>
</reference>
<reference key="3">
    <citation type="journal article" date="2010" name="Cell">
        <title>A tissue-specific atlas of mouse protein phosphorylation and expression.</title>
        <authorList>
            <person name="Huttlin E.L."/>
            <person name="Jedrychowski M.P."/>
            <person name="Elias J.E."/>
            <person name="Goswami T."/>
            <person name="Rad R."/>
            <person name="Beausoleil S.A."/>
            <person name="Villen J."/>
            <person name="Haas W."/>
            <person name="Sowa M.E."/>
            <person name="Gygi S.P."/>
        </authorList>
    </citation>
    <scope>IDENTIFICATION BY MASS SPECTROMETRY [LARGE SCALE ANALYSIS]</scope>
    <source>
        <tissue>Brain</tissue>
        <tissue>Lung</tissue>
        <tissue>Pancreas</tissue>
    </source>
</reference>
<reference key="4">
    <citation type="journal article" date="2018" name="Cell Rep.">
        <title>The E3 Ubiquitin Ligases TRIM17 and TRIM41 Modulate alpha-Synuclein Expression by Regulating ZSCAN21.</title>
        <authorList>
            <person name="Lassot I."/>
            <person name="Mora S."/>
            <person name="Lesage S."/>
            <person name="Zieba B.A."/>
            <person name="Coque E."/>
            <person name="Condroyer C."/>
            <person name="Bossowski J.P."/>
            <person name="Mojsa B."/>
            <person name="Marelli C."/>
            <person name="Soulet C."/>
            <person name="Tesson C."/>
            <person name="Carballo-Carbajal I."/>
            <person name="Laguna A."/>
            <person name="Mangone G."/>
            <person name="Vila M."/>
            <person name="Brice A."/>
            <person name="Desagher S."/>
        </authorList>
    </citation>
    <scope>FUNCTION</scope>
    <scope>INTERACTION WITH TRIM17</scope>
</reference>
<reference key="5">
    <citation type="journal article" date="2021" name="Signal Transduct.">
        <title>TRIM41 is required to innate antiviral response by polyubiquitinating BCL10 and recruiting NEMO.</title>
        <authorList>
            <person name="Yu Z."/>
            <person name="Li X."/>
            <person name="Yang M."/>
            <person name="Huang J."/>
            <person name="Fang Q."/>
            <person name="Jia J."/>
            <person name="Li Z."/>
            <person name="Gu Y."/>
            <person name="Chen T."/>
            <person name="Cao X."/>
        </authorList>
    </citation>
    <scope>FUNCTION</scope>
    <scope>CATALYTIC ACTIVITY</scope>
    <scope>PATHWAY</scope>
    <scope>DISRUPTION PHENOTYPE</scope>
    <scope>SUBCELLULAR LOCATION</scope>
</reference>
<accession>Q5NCC3</accession>
<proteinExistence type="evidence at protein level"/>
<sequence length="630" mass="71818">MAAVAMTPNPVQTLQEEAVCAICLDYFTDPVSIGCGHNFCRVCVTQLWGGEDEEDRDELDREEEEEEVGEEEEVEAVGAGGGWDTPMREEDYEGDMEEEAEEEEEVFWSSGIGGSNWDNMDYVWEEEEEEEEEELDYYLGDVADLRGEDEDEEEEVLEEDEEEELDPITQLPPPPAPRRCFTCPQCRKSFPRRSFRPNLQLANMVQVIRQMHPTPGRGSRVNEQGICPRHQEALKLFCEVDEEAICVVCRESRSHKQHSVVPLEEVVQEYKAKLQGHVEPLRKHLEAVQKMKAKEERRVTELKSQMKSELAAVASEFGRLTRFLAEEQAGLERRLREMHEAQLGRAGAAANRLEEQAAQLSRLLAEAQERSQQGGLRLLQDIKETFNRCEEIQLQPPEIWSPDPCQPHSHDFLTDAIVRKMSRMFCQAARVDLTLDPDTAHPALLLSPDRRGVRLAERRQEVPEHSKRFSADCCVLGAQGFRSGRHYWEVEVGGRRGWAVGAARESTHHKEKVGSGGSSVSSGDASSSRHHHRRRRLHLPQQLLLQREVWCVGTHGKRYQAQSSTEQTLLSPCEKPRRFGVYLDYEAGRLGFYNADTLAHVHTFSAAFLGERVFPFFRVLSKGTRIKLCP</sequence>
<comment type="function">
    <text evidence="1 7 8">E3 ligase that plays essential roles in innate antiviral response (PubMed:33640899). Directly binds to influenza A virus or vesicular stomatitis virus nucleoproteins and targets them for ubiquitination and proteasomal degradation, thereby limiting viral infections (By similarity). Activates the innate antiviral response by catalyzing monoubiquitination of CGAS, thereby activating CGAS (By similarity). Also involved in innate antiviral response by mediating 'Lys-63'-linked polyubiquitylation of BCL10 which in turn hubs NEMO for activation of NF-kappa-B and IRF3 pathways (PubMed:33640899). Catalyzes the ubiquitin-mediated degradation of other substrates including protein kinase C, ZSCAN21 or TOP3B suggesting additional roles besides its function in immune response (PubMed:30485814).</text>
</comment>
<comment type="catalytic activity">
    <reaction evidence="8">
        <text>S-ubiquitinyl-[E2 ubiquitin-conjugating enzyme]-L-cysteine + [acceptor protein]-L-lysine = [E2 ubiquitin-conjugating enzyme]-L-cysteine + N(6)-ubiquitinyl-[acceptor protein]-L-lysine.</text>
        <dbReference type="EC" id="2.3.2.27"/>
    </reaction>
</comment>
<comment type="pathway">
    <text evidence="8">Protein modification; protein ubiquitination.</text>
</comment>
<comment type="subunit">
    <text evidence="1 7">Interacts with PRKCA. Interacts with NOD2 (By similarity). Interacts with TRIM17; this interaction prevents TRIM41 activity on ZSCAN2 (PubMed:30485814).</text>
</comment>
<comment type="subcellular location">
    <subcellularLocation>
        <location evidence="8">Cytoplasm</location>
    </subcellularLocation>
    <subcellularLocation>
        <location evidence="1">Nucleus</location>
    </subcellularLocation>
</comment>
<comment type="PTM">
    <text evidence="1">Auto-ubiquitinated.</text>
</comment>
<comment type="disruption phenotype">
    <text evidence="8">Deletion mutant impairs the production of inflammatory cytokines and type I interferons in macrophages after infection with both DNA and RNA viruses.</text>
</comment>
<comment type="similarity">
    <text evidence="10">Belongs to the TRIM/RBCC family.</text>
</comment>
<gene>
    <name evidence="9 11" type="primary">Trim41</name>
</gene>
<protein>
    <recommendedName>
        <fullName evidence="10">E3 ubiquitin-protein ligase TRIM41</fullName>
        <ecNumber evidence="7">2.3.2.27</ecNumber>
    </recommendedName>
    <alternativeName>
        <fullName>Tripartite motif-containing protein 41</fullName>
    </alternativeName>
</protein>